<feature type="initiator methionine" description="Removed" evidence="2">
    <location>
        <position position="1"/>
    </location>
</feature>
<feature type="chain" id="PRO_0000221159" description="Signal peptidase complex subunit 2">
    <location>
        <begin position="2"/>
        <end position="226"/>
    </location>
</feature>
<feature type="topological domain" description="Cytoplasmic" evidence="3">
    <location>
        <begin position="2"/>
        <end position="86"/>
    </location>
</feature>
<feature type="transmembrane region" description="Helical" evidence="4">
    <location>
        <begin position="87"/>
        <end position="107"/>
    </location>
</feature>
<feature type="topological domain" description="Lumenal" evidence="3">
    <location>
        <begin position="108"/>
        <end position="111"/>
    </location>
</feature>
<feature type="transmembrane region" description="Helical" evidence="4">
    <location>
        <begin position="112"/>
        <end position="132"/>
    </location>
</feature>
<feature type="topological domain" description="Cytoplasmic" evidence="3">
    <location>
        <begin position="133"/>
        <end position="226"/>
    </location>
</feature>
<feature type="region of interest" description="Disordered" evidence="5">
    <location>
        <begin position="1"/>
        <end position="26"/>
    </location>
</feature>
<feature type="compositionally biased region" description="Gly residues" evidence="5">
    <location>
        <begin position="9"/>
        <end position="26"/>
    </location>
</feature>
<feature type="modified residue" description="N-acetylalanine" evidence="2">
    <location>
        <position position="2"/>
    </location>
</feature>
<feature type="modified residue" description="N6-acetyllysine" evidence="2">
    <location>
        <position position="169"/>
    </location>
</feature>
<feature type="modified residue" description="N6-acetyllysine" evidence="2">
    <location>
        <position position="191"/>
    </location>
</feature>
<sequence length="226" mass="25014">MAAAATQGGRSGGLGGNSGAGGGSNCGTGSGRSGLLDKWKIDDKPVKIDKWDGSAVKNSLDDSAKKVLLEKYKYVENFGLIDGRLTICTISCFFAIVALIWDYMHPFPESKPVLALCVISYFVMMGILTIYTSYKEKSIFLVAHRKDPTGMDPDDIWQLSSSLKRFDDKYTLKLTFISGRTKQQREAEFTKSIAKFFDHSGTLVMDAYEPEISRLHDSLAVERKIK</sequence>
<name>SPCS2_MACFA</name>
<comment type="function">
    <text evidence="1 2">Component of the signal peptidase complex (SPC) which catalyzes the cleavage of N-terminal signal sequences from nascent proteins as they are translocated into the lumen of the endoplasmic reticulum (By similarity). Enhances the enzymatic activity of SPC and facilitates the interactions between different components of the translocation site (By similarity).</text>
</comment>
<comment type="subunit">
    <text evidence="2">Component of the signal peptidase complex paralog A (SPC-A) composed of a catalytic subunit SEC11A and three accessory subunits SPCS1, SPCS2 and SPCS3. Component of the signal peptidase complex paralog C (SPC-C) composed of a catalytic subunit SEC11C and three accessory subunits SPCS1, SPCS2 and SPCS3. Within the complex, interacts with SEC11A or SEC11C and SPCS1. The complex induces a local thinning of the ER membrane which is used to measure the length of the signal peptide (SP) h-region of protein substrates. This ensures the selectivity of the complex towards h-regions shorter than 18-20 amino acids.</text>
</comment>
<comment type="subcellular location">
    <subcellularLocation>
        <location evidence="3">Endoplasmic reticulum membrane</location>
        <topology evidence="3">Multi-pass membrane protein</topology>
    </subcellularLocation>
</comment>
<comment type="similarity">
    <text evidence="6">Belongs to the SPCS2 family.</text>
</comment>
<reference key="1">
    <citation type="submission" date="2005-06" db="EMBL/GenBank/DDBJ databases">
        <title>DNA sequences of macaque genes expressed in brain or testis and its evolutionary implications.</title>
        <authorList>
            <consortium name="International consortium for macaque cDNA sequencing and analysis"/>
        </authorList>
    </citation>
    <scope>NUCLEOTIDE SEQUENCE [LARGE SCALE MRNA]</scope>
    <source>
        <tissue>Frontal cortex</tissue>
    </source>
</reference>
<dbReference type="EMBL" id="AB169732">
    <property type="protein sequence ID" value="BAE01813.1"/>
    <property type="molecule type" value="mRNA"/>
</dbReference>
<dbReference type="RefSeq" id="NP_001274217.1">
    <property type="nucleotide sequence ID" value="NM_001287288.1"/>
</dbReference>
<dbReference type="RefSeq" id="XP_065384797.1">
    <property type="nucleotide sequence ID" value="XM_065528725.1"/>
</dbReference>
<dbReference type="SMR" id="Q4R512"/>
<dbReference type="STRING" id="9541.ENSMFAP00000035204"/>
<dbReference type="GeneID" id="102116673"/>
<dbReference type="VEuPathDB" id="HostDB:ENSMFAG00000040665"/>
<dbReference type="eggNOG" id="KOG4072">
    <property type="taxonomic scope" value="Eukaryota"/>
</dbReference>
<dbReference type="OMA" id="INKWDGT"/>
<dbReference type="Proteomes" id="UP000233100">
    <property type="component" value="Chromosome 14"/>
</dbReference>
<dbReference type="GO" id="GO:0005787">
    <property type="term" value="C:signal peptidase complex"/>
    <property type="evidence" value="ECO:0007669"/>
    <property type="project" value="InterPro"/>
</dbReference>
<dbReference type="GO" id="GO:0045047">
    <property type="term" value="P:protein targeting to ER"/>
    <property type="evidence" value="ECO:0007669"/>
    <property type="project" value="TreeGrafter"/>
</dbReference>
<dbReference type="GO" id="GO:0006465">
    <property type="term" value="P:signal peptide processing"/>
    <property type="evidence" value="ECO:0007669"/>
    <property type="project" value="InterPro"/>
</dbReference>
<dbReference type="InterPro" id="IPR009582">
    <property type="entry name" value="Spc2/SPCS2"/>
</dbReference>
<dbReference type="PANTHER" id="PTHR13085">
    <property type="entry name" value="MICROSOMAL SIGNAL PEPTIDASE 25 KDA SUBUNIT"/>
    <property type="match status" value="1"/>
</dbReference>
<dbReference type="PANTHER" id="PTHR13085:SF0">
    <property type="entry name" value="SIGNAL PEPTIDASE COMPLEX SUBUNIT 2"/>
    <property type="match status" value="1"/>
</dbReference>
<dbReference type="Pfam" id="PF06703">
    <property type="entry name" value="SPC25"/>
    <property type="match status" value="1"/>
</dbReference>
<proteinExistence type="evidence at transcript level"/>
<organism>
    <name type="scientific">Macaca fascicularis</name>
    <name type="common">Crab-eating macaque</name>
    <name type="synonym">Cynomolgus monkey</name>
    <dbReference type="NCBI Taxonomy" id="9541"/>
    <lineage>
        <taxon>Eukaryota</taxon>
        <taxon>Metazoa</taxon>
        <taxon>Chordata</taxon>
        <taxon>Craniata</taxon>
        <taxon>Vertebrata</taxon>
        <taxon>Euteleostomi</taxon>
        <taxon>Mammalia</taxon>
        <taxon>Eutheria</taxon>
        <taxon>Euarchontoglires</taxon>
        <taxon>Primates</taxon>
        <taxon>Haplorrhini</taxon>
        <taxon>Catarrhini</taxon>
        <taxon>Cercopithecidae</taxon>
        <taxon>Cercopithecinae</taxon>
        <taxon>Macaca</taxon>
    </lineage>
</organism>
<protein>
    <recommendedName>
        <fullName>Signal peptidase complex subunit 2</fullName>
    </recommendedName>
    <alternativeName>
        <fullName>Microsomal signal peptidase 25 kDa subunit</fullName>
        <shortName>SPase 25 kDa subunit</shortName>
    </alternativeName>
</protein>
<gene>
    <name type="primary">SPCS2</name>
    <name type="ORF">QflA-13117</name>
</gene>
<evidence type="ECO:0000250" key="1">
    <source>
        <dbReference type="UniProtKB" id="Q04969"/>
    </source>
</evidence>
<evidence type="ECO:0000250" key="2">
    <source>
        <dbReference type="UniProtKB" id="Q15005"/>
    </source>
</evidence>
<evidence type="ECO:0000250" key="3">
    <source>
        <dbReference type="UniProtKB" id="Q28250"/>
    </source>
</evidence>
<evidence type="ECO:0000255" key="4"/>
<evidence type="ECO:0000256" key="5">
    <source>
        <dbReference type="SAM" id="MobiDB-lite"/>
    </source>
</evidence>
<evidence type="ECO:0000305" key="6"/>
<keyword id="KW-0007">Acetylation</keyword>
<keyword id="KW-0256">Endoplasmic reticulum</keyword>
<keyword id="KW-0472">Membrane</keyword>
<keyword id="KW-1185">Reference proteome</keyword>
<keyword id="KW-0812">Transmembrane</keyword>
<keyword id="KW-1133">Transmembrane helix</keyword>
<accession>Q4R512</accession>